<name>Y2389_ENT38</name>
<organism>
    <name type="scientific">Enterobacter sp. (strain 638)</name>
    <dbReference type="NCBI Taxonomy" id="399742"/>
    <lineage>
        <taxon>Bacteria</taxon>
        <taxon>Pseudomonadati</taxon>
        <taxon>Pseudomonadota</taxon>
        <taxon>Gammaproteobacteria</taxon>
        <taxon>Enterobacterales</taxon>
        <taxon>Enterobacteriaceae</taxon>
        <taxon>Enterobacter</taxon>
    </lineage>
</organism>
<feature type="chain" id="PRO_1000064584" description="UPF0266 membrane protein Ent638_2389">
    <location>
        <begin position="1"/>
        <end position="152"/>
    </location>
</feature>
<feature type="transmembrane region" description="Helical" evidence="1">
    <location>
        <begin position="6"/>
        <end position="26"/>
    </location>
</feature>
<feature type="transmembrane region" description="Helical" evidence="1">
    <location>
        <begin position="45"/>
        <end position="65"/>
    </location>
</feature>
<feature type="transmembrane region" description="Helical" evidence="1">
    <location>
        <begin position="67"/>
        <end position="87"/>
    </location>
</feature>
<protein>
    <recommendedName>
        <fullName evidence="1">UPF0266 membrane protein Ent638_2389</fullName>
    </recommendedName>
</protein>
<evidence type="ECO:0000255" key="1">
    <source>
        <dbReference type="HAMAP-Rule" id="MF_01071"/>
    </source>
</evidence>
<dbReference type="EMBL" id="CP000653">
    <property type="protein sequence ID" value="ABP61058.1"/>
    <property type="molecule type" value="Genomic_DNA"/>
</dbReference>
<dbReference type="RefSeq" id="WP_012017771.1">
    <property type="nucleotide sequence ID" value="NC_009436.1"/>
</dbReference>
<dbReference type="SMR" id="A4WBH8"/>
<dbReference type="STRING" id="399742.Ent638_2389"/>
<dbReference type="KEGG" id="ent:Ent638_2389"/>
<dbReference type="eggNOG" id="COG4811">
    <property type="taxonomic scope" value="Bacteria"/>
</dbReference>
<dbReference type="HOGENOM" id="CLU_133645_0_0_6"/>
<dbReference type="OrthoDB" id="2360740at2"/>
<dbReference type="Proteomes" id="UP000000230">
    <property type="component" value="Chromosome"/>
</dbReference>
<dbReference type="GO" id="GO:0005886">
    <property type="term" value="C:plasma membrane"/>
    <property type="evidence" value="ECO:0007669"/>
    <property type="project" value="UniProtKB-SubCell"/>
</dbReference>
<dbReference type="HAMAP" id="MF_01071">
    <property type="entry name" value="UPF0266"/>
    <property type="match status" value="1"/>
</dbReference>
<dbReference type="InterPro" id="IPR009328">
    <property type="entry name" value="DUF986"/>
</dbReference>
<dbReference type="NCBIfam" id="NF002791">
    <property type="entry name" value="PRK02913.1"/>
    <property type="match status" value="1"/>
</dbReference>
<dbReference type="Pfam" id="PF06173">
    <property type="entry name" value="DUF986"/>
    <property type="match status" value="1"/>
</dbReference>
<dbReference type="PIRSF" id="PIRSF020687">
    <property type="entry name" value="UCP020687"/>
    <property type="match status" value="1"/>
</dbReference>
<gene>
    <name type="ordered locus">Ent638_2389</name>
</gene>
<proteinExistence type="inferred from homology"/>
<accession>A4WBH8</accession>
<keyword id="KW-0997">Cell inner membrane</keyword>
<keyword id="KW-1003">Cell membrane</keyword>
<keyword id="KW-0472">Membrane</keyword>
<keyword id="KW-0812">Transmembrane</keyword>
<keyword id="KW-1133">Transmembrane helix</keyword>
<reference key="1">
    <citation type="journal article" date="2010" name="PLoS Genet.">
        <title>Genome sequence of the plant growth promoting endophytic bacterium Enterobacter sp. 638.</title>
        <authorList>
            <person name="Taghavi S."/>
            <person name="van der Lelie D."/>
            <person name="Hoffman A."/>
            <person name="Zhang Y.B."/>
            <person name="Walla M.D."/>
            <person name="Vangronsveld J."/>
            <person name="Newman L."/>
            <person name="Monchy S."/>
        </authorList>
    </citation>
    <scope>NUCLEOTIDE SEQUENCE [LARGE SCALE GENOMIC DNA]</scope>
    <source>
        <strain>638</strain>
    </source>
</reference>
<sequence>MTVTDIVLVLFIVALLAYAFYDEFIMPRRNGETLLAVPLLRRGRVDAFIFAGLLAILIYNNVMSQGALLTTWLLCVLALMAFYLFWIRAPKIIFKSHGFFFANIWIEYNRIKEMNLSEDGVLVIQLEQRRLLVRVKNIDDLEKIYKIMVKTQ</sequence>
<comment type="subcellular location">
    <subcellularLocation>
        <location evidence="1">Cell inner membrane</location>
        <topology evidence="1">Multi-pass membrane protein</topology>
    </subcellularLocation>
</comment>
<comment type="similarity">
    <text evidence="1">Belongs to the UPF0266 family.</text>
</comment>